<protein>
    <recommendedName>
        <fullName evidence="1">Phosphopantetheine adenylyltransferase</fullName>
        <ecNumber evidence="1">2.7.7.3</ecNumber>
    </recommendedName>
    <alternativeName>
        <fullName evidence="1">Dephospho-CoA pyrophosphorylase</fullName>
    </alternativeName>
    <alternativeName>
        <fullName evidence="1">Pantetheine-phosphate adenylyltransferase</fullName>
        <shortName evidence="1">PPAT</shortName>
    </alternativeName>
</protein>
<reference key="1">
    <citation type="journal article" date="2007" name="Genome Biol.">
        <title>Genome analysis and genome-wide proteomics of Thermococcus gammatolerans, the most radioresistant organism known amongst the Archaea.</title>
        <authorList>
            <person name="Zivanovic Y."/>
            <person name="Armengaud J."/>
            <person name="Lagorce A."/>
            <person name="Leplat C."/>
            <person name="Guerin P."/>
            <person name="Dutertre M."/>
            <person name="Anthouard V."/>
            <person name="Forterre P."/>
            <person name="Wincker P."/>
            <person name="Confalonieri F."/>
        </authorList>
    </citation>
    <scope>NUCLEOTIDE SEQUENCE [LARGE SCALE GENOMIC DNA]</scope>
    <source>
        <strain>DSM 15229 / JCM 11827 / EJ3</strain>
    </source>
</reference>
<dbReference type="EC" id="2.7.7.3" evidence="1"/>
<dbReference type="EMBL" id="CP001398">
    <property type="protein sequence ID" value="ACS32775.1"/>
    <property type="molecule type" value="Genomic_DNA"/>
</dbReference>
<dbReference type="RefSeq" id="WP_015857894.1">
    <property type="nucleotide sequence ID" value="NC_012804.1"/>
</dbReference>
<dbReference type="SMR" id="C5A3G3"/>
<dbReference type="STRING" id="593117.TGAM_0273"/>
<dbReference type="PaxDb" id="593117-TGAM_0273"/>
<dbReference type="GeneID" id="7988929"/>
<dbReference type="KEGG" id="tga:TGAM_0273"/>
<dbReference type="PATRIC" id="fig|593117.10.peg.276"/>
<dbReference type="eggNOG" id="arCOG01223">
    <property type="taxonomic scope" value="Archaea"/>
</dbReference>
<dbReference type="HOGENOM" id="CLU_035272_5_0_2"/>
<dbReference type="OrthoDB" id="53228at2157"/>
<dbReference type="UniPathway" id="UPA00241"/>
<dbReference type="Proteomes" id="UP000001488">
    <property type="component" value="Chromosome"/>
</dbReference>
<dbReference type="GO" id="GO:0005737">
    <property type="term" value="C:cytoplasm"/>
    <property type="evidence" value="ECO:0007669"/>
    <property type="project" value="UniProtKB-SubCell"/>
</dbReference>
<dbReference type="GO" id="GO:0005524">
    <property type="term" value="F:ATP binding"/>
    <property type="evidence" value="ECO:0007669"/>
    <property type="project" value="UniProtKB-KW"/>
</dbReference>
<dbReference type="GO" id="GO:0004140">
    <property type="term" value="F:dephospho-CoA kinase activity"/>
    <property type="evidence" value="ECO:0007669"/>
    <property type="project" value="TreeGrafter"/>
</dbReference>
<dbReference type="GO" id="GO:0004595">
    <property type="term" value="F:pantetheine-phosphate adenylyltransferase activity"/>
    <property type="evidence" value="ECO:0007669"/>
    <property type="project" value="UniProtKB-UniRule"/>
</dbReference>
<dbReference type="GO" id="GO:0015937">
    <property type="term" value="P:coenzyme A biosynthetic process"/>
    <property type="evidence" value="ECO:0007669"/>
    <property type="project" value="UniProtKB-UniRule"/>
</dbReference>
<dbReference type="CDD" id="cd02164">
    <property type="entry name" value="PPAT_CoAS"/>
    <property type="match status" value="1"/>
</dbReference>
<dbReference type="Gene3D" id="3.40.50.620">
    <property type="entry name" value="HUPs"/>
    <property type="match status" value="1"/>
</dbReference>
<dbReference type="HAMAP" id="MF_00647">
    <property type="entry name" value="PPAT_arch"/>
    <property type="match status" value="1"/>
</dbReference>
<dbReference type="InterPro" id="IPR054937">
    <property type="entry name" value="CoaD_Thcocales"/>
</dbReference>
<dbReference type="InterPro" id="IPR004821">
    <property type="entry name" value="Cyt_trans-like"/>
</dbReference>
<dbReference type="InterPro" id="IPR023540">
    <property type="entry name" value="PPAT_arch"/>
</dbReference>
<dbReference type="InterPro" id="IPR014729">
    <property type="entry name" value="Rossmann-like_a/b/a_fold"/>
</dbReference>
<dbReference type="NCBIfam" id="NF041124">
    <property type="entry name" value="CoaD_Thcocales"/>
    <property type="match status" value="1"/>
</dbReference>
<dbReference type="NCBIfam" id="TIGR00125">
    <property type="entry name" value="cyt_tran_rel"/>
    <property type="match status" value="1"/>
</dbReference>
<dbReference type="NCBIfam" id="NF001985">
    <property type="entry name" value="PRK00777.1"/>
    <property type="match status" value="1"/>
</dbReference>
<dbReference type="PANTHER" id="PTHR10695:SF46">
    <property type="entry name" value="BIFUNCTIONAL COENZYME A SYNTHASE-RELATED"/>
    <property type="match status" value="1"/>
</dbReference>
<dbReference type="PANTHER" id="PTHR10695">
    <property type="entry name" value="DEPHOSPHO-COA KINASE-RELATED"/>
    <property type="match status" value="1"/>
</dbReference>
<dbReference type="Pfam" id="PF01467">
    <property type="entry name" value="CTP_transf_like"/>
    <property type="match status" value="1"/>
</dbReference>
<dbReference type="SUPFAM" id="SSF52374">
    <property type="entry name" value="Nucleotidylyl transferase"/>
    <property type="match status" value="1"/>
</dbReference>
<gene>
    <name evidence="1" type="primary">coaD</name>
    <name type="ordered locus">TGAM_0273</name>
</gene>
<accession>C5A3G3</accession>
<keyword id="KW-0067">ATP-binding</keyword>
<keyword id="KW-0173">Coenzyme A biosynthesis</keyword>
<keyword id="KW-0963">Cytoplasm</keyword>
<keyword id="KW-0547">Nucleotide-binding</keyword>
<keyword id="KW-0548">Nucleotidyltransferase</keyword>
<keyword id="KW-1185">Reference proteome</keyword>
<keyword id="KW-0808">Transferase</keyword>
<proteinExistence type="inferred from homology"/>
<feature type="chain" id="PRO_1000212388" description="Phosphopantetheine adenylyltransferase">
    <location>
        <begin position="1"/>
        <end position="159"/>
    </location>
</feature>
<sequence>MRKPYRKVVVGGTFDRLHLGHKALLRKAFEVGRYVYVGLTSDEMIRNKPYAEKILPYELRLMDLLKFFEVNGYTNYRIIKINTAIGFADRIKSLEAIVVSEETYKGALLVNRAREERGLKPLEIVTIKLVKSRIGPKISSTLIRAGLIDPFGNPLKKDN</sequence>
<name>COAD_THEGJ</name>
<organism>
    <name type="scientific">Thermococcus gammatolerans (strain DSM 15229 / JCM 11827 / EJ3)</name>
    <dbReference type="NCBI Taxonomy" id="593117"/>
    <lineage>
        <taxon>Archaea</taxon>
        <taxon>Methanobacteriati</taxon>
        <taxon>Methanobacteriota</taxon>
        <taxon>Thermococci</taxon>
        <taxon>Thermococcales</taxon>
        <taxon>Thermococcaceae</taxon>
        <taxon>Thermococcus</taxon>
    </lineage>
</organism>
<evidence type="ECO:0000255" key="1">
    <source>
        <dbReference type="HAMAP-Rule" id="MF_00647"/>
    </source>
</evidence>
<comment type="function">
    <text evidence="1">Reversibly transfers an adenylyl group from ATP to 4'-phosphopantetheine, yielding dephospho-CoA (dPCoA) and pyrophosphate.</text>
</comment>
<comment type="catalytic activity">
    <reaction evidence="1">
        <text>(R)-4'-phosphopantetheine + ATP + H(+) = 3'-dephospho-CoA + diphosphate</text>
        <dbReference type="Rhea" id="RHEA:19801"/>
        <dbReference type="ChEBI" id="CHEBI:15378"/>
        <dbReference type="ChEBI" id="CHEBI:30616"/>
        <dbReference type="ChEBI" id="CHEBI:33019"/>
        <dbReference type="ChEBI" id="CHEBI:57328"/>
        <dbReference type="ChEBI" id="CHEBI:61723"/>
        <dbReference type="EC" id="2.7.7.3"/>
    </reaction>
</comment>
<comment type="pathway">
    <text evidence="1">Cofactor biosynthesis; coenzyme A biosynthesis.</text>
</comment>
<comment type="subcellular location">
    <subcellularLocation>
        <location evidence="1">Cytoplasm</location>
    </subcellularLocation>
</comment>
<comment type="similarity">
    <text evidence="1">Belongs to the eukaryotic CoaD family.</text>
</comment>